<evidence type="ECO:0000250" key="1">
    <source>
        <dbReference type="UniProtKB" id="B8XTP8"/>
    </source>
</evidence>
<evidence type="ECO:0000250" key="2">
    <source>
        <dbReference type="UniProtKB" id="P03300"/>
    </source>
</evidence>
<evidence type="ECO:0000250" key="3">
    <source>
        <dbReference type="UniProtKB" id="P03304"/>
    </source>
</evidence>
<evidence type="ECO:0000250" key="4">
    <source>
        <dbReference type="UniProtKB" id="P03305"/>
    </source>
</evidence>
<evidence type="ECO:0000250" key="5">
    <source>
        <dbReference type="UniProtKB" id="P08617"/>
    </source>
</evidence>
<evidence type="ECO:0000250" key="6">
    <source>
        <dbReference type="UniProtKB" id="P12296"/>
    </source>
</evidence>
<evidence type="ECO:0000250" key="7">
    <source>
        <dbReference type="UniProtKB" id="Q66282"/>
    </source>
</evidence>
<evidence type="ECO:0000250" key="8">
    <source>
        <dbReference type="UniProtKB" id="Q66765"/>
    </source>
</evidence>
<evidence type="ECO:0000255" key="9">
    <source>
        <dbReference type="PROSITE-ProRule" id="PRU00539"/>
    </source>
</evidence>
<evidence type="ECO:0000255" key="10">
    <source>
        <dbReference type="PROSITE-ProRule" id="PRU00551"/>
    </source>
</evidence>
<evidence type="ECO:0000255" key="11">
    <source>
        <dbReference type="PROSITE-ProRule" id="PRU01222"/>
    </source>
</evidence>
<evidence type="ECO:0000256" key="12">
    <source>
        <dbReference type="SAM" id="MobiDB-lite"/>
    </source>
</evidence>
<evidence type="ECO:0000269" key="13">
    <source>
    </source>
</evidence>
<evidence type="ECO:0000269" key="14">
    <source>
    </source>
</evidence>
<evidence type="ECO:0000269" key="15">
    <source>
    </source>
</evidence>
<evidence type="ECO:0000269" key="16">
    <source>
    </source>
</evidence>
<evidence type="ECO:0000269" key="17">
    <source>
    </source>
</evidence>
<evidence type="ECO:0000269" key="18">
    <source>
    </source>
</evidence>
<evidence type="ECO:0000269" key="19">
    <source>
    </source>
</evidence>
<evidence type="ECO:0000269" key="20">
    <source>
    </source>
</evidence>
<evidence type="ECO:0000305" key="21"/>
<evidence type="ECO:0000305" key="22">
    <source>
    </source>
</evidence>
<evidence type="ECO:0000305" key="23">
    <source>
    </source>
</evidence>
<evidence type="ECO:0000312" key="24">
    <source>
        <dbReference type="Proteomes" id="UP000000672"/>
    </source>
</evidence>
<evidence type="ECO:0007744" key="25">
    <source>
        <dbReference type="PDB" id="3CJI"/>
    </source>
</evidence>
<evidence type="ECO:0007744" key="26">
    <source>
        <dbReference type="PDB" id="6ADL"/>
    </source>
</evidence>
<evidence type="ECO:0007744" key="27">
    <source>
        <dbReference type="PDB" id="6CX1"/>
    </source>
</evidence>
<evidence type="ECO:0007744" key="28">
    <source>
        <dbReference type="PDB" id="6L0T"/>
    </source>
</evidence>
<evidence type="ECO:0007829" key="29">
    <source>
        <dbReference type="PDB" id="3CJI"/>
    </source>
</evidence>
<evidence type="ECO:0007829" key="30">
    <source>
        <dbReference type="PDB" id="6ADL"/>
    </source>
</evidence>
<evidence type="ECO:0007829" key="31">
    <source>
        <dbReference type="PDB" id="6L0T"/>
    </source>
</evidence>
<accession>Q155Z9</accession>
<organismHost>
    <name type="scientific">Sus scrofa</name>
    <name type="common">Pig</name>
    <dbReference type="NCBI Taxonomy" id="9823"/>
</organismHost>
<feature type="chain" id="PRO_0000446923" description="Genome polyprotein">
    <location>
        <begin position="1"/>
        <end position="2181"/>
    </location>
</feature>
<feature type="chain" id="PRO_0000446924" description="Leader protein">
    <location>
        <begin position="1"/>
        <end position="79"/>
    </location>
</feature>
<feature type="chain" id="PRO_0000446925" description="Capsid protein VP0">
    <location>
        <begin position="80"/>
        <end position="434"/>
    </location>
</feature>
<feature type="chain" id="PRO_0000446926" description="Capsid protein VP4">
    <location>
        <begin position="80"/>
        <end position="150"/>
    </location>
</feature>
<feature type="chain" id="PRO_0000446927" description="Capsid protein VP2">
    <location>
        <begin position="151"/>
        <end position="434"/>
    </location>
</feature>
<feature type="chain" id="PRO_0000446928" description="Capsid protein VP3">
    <location>
        <begin position="435"/>
        <end position="673"/>
    </location>
</feature>
<feature type="chain" id="PRO_0000446929" description="Capsid protein VP1">
    <location>
        <begin position="674"/>
        <end position="937"/>
    </location>
</feature>
<feature type="chain" id="PRO_0000446930" description="Protein 2A">
    <location>
        <begin position="938"/>
        <end position="946"/>
    </location>
</feature>
<feature type="chain" id="PRO_0000446931" description="Protein 2B">
    <location>
        <begin position="947"/>
        <end position="1074"/>
    </location>
</feature>
<feature type="chain" id="PRO_0000446932" description="Protein 2C">
    <location>
        <begin position="1075"/>
        <end position="1396"/>
    </location>
</feature>
<feature type="chain" id="PRO_0000446933" description="Protein 3A">
    <location>
        <begin position="1397"/>
        <end position="1486"/>
    </location>
</feature>
<feature type="chain" id="PRO_0000446934" description="VPg">
    <location>
        <begin position="1487"/>
        <end position="1507"/>
    </location>
</feature>
<feature type="chain" id="PRO_0000446935" description="Protease 3C">
    <location>
        <begin position="1508"/>
        <end position="1719"/>
    </location>
</feature>
<feature type="chain" id="PRO_0000446936" description="RNA-directed RNA polymerase">
    <location>
        <begin position="1720"/>
        <end position="2181"/>
    </location>
</feature>
<feature type="domain" description="SF3 helicase" evidence="10">
    <location>
        <begin position="1165"/>
        <end position="1333"/>
    </location>
</feature>
<feature type="domain" description="Peptidase C3" evidence="11">
    <location>
        <begin position="1511"/>
        <end position="1704"/>
    </location>
</feature>
<feature type="domain" description="RdRp catalytic" evidence="9">
    <location>
        <begin position="1950"/>
        <end position="2068"/>
    </location>
</feature>
<feature type="region of interest" description="Interaction with host receptor ANTXR1" evidence="18">
    <location>
        <begin position="316"/>
        <end position="337"/>
    </location>
</feature>
<feature type="region of interest" description="Interaction with host receptor ANTXR1" evidence="18">
    <location>
        <begin position="761"/>
        <end position="772"/>
    </location>
</feature>
<feature type="region of interest" description="Disordered" evidence="12">
    <location>
        <begin position="1472"/>
        <end position="1500"/>
    </location>
</feature>
<feature type="active site" description="For protease 3C activity and deubiquitinase activity" evidence="11 17">
    <location>
        <position position="1556"/>
    </location>
</feature>
<feature type="active site" description="For protease 3C activity" evidence="11">
    <location>
        <position position="1592"/>
    </location>
</feature>
<feature type="active site" description="For protease 3C activity and deubiquitinase activity" evidence="11 17">
    <location>
        <position position="1668"/>
    </location>
</feature>
<feature type="active site" description="For RdRp activity" evidence="6">
    <location>
        <position position="1956"/>
    </location>
</feature>
<feature type="active site" description="For RdRp activity" evidence="6">
    <location>
        <position position="2054"/>
    </location>
</feature>
<feature type="binding site" evidence="10">
    <location>
        <begin position="1197"/>
        <end position="1204"/>
    </location>
    <ligand>
        <name>ATP</name>
        <dbReference type="ChEBI" id="CHEBI:30616"/>
    </ligand>
</feature>
<feature type="site" description="Cleavage; by protease 3C" evidence="22">
    <location>
        <begin position="79"/>
        <end position="80"/>
    </location>
</feature>
<feature type="site" description="Cleavage" evidence="22">
    <location>
        <begin position="150"/>
        <end position="151"/>
    </location>
</feature>
<feature type="site" description="Cleavage; by protease 3C" evidence="20 22">
    <location>
        <begin position="434"/>
        <end position="435"/>
    </location>
</feature>
<feature type="site" description="Cleavage; by protease 3C" evidence="20">
    <location>
        <begin position="673"/>
        <end position="674"/>
    </location>
</feature>
<feature type="site" description="Cleavage; by protease 3C" evidence="20 22">
    <location>
        <begin position="937"/>
        <end position="938"/>
    </location>
</feature>
<feature type="site" description="Cleavage; by ribosomal skip" evidence="3">
    <location>
        <begin position="946"/>
        <end position="947"/>
    </location>
</feature>
<feature type="site" description="Cleavage; by protease 3C" evidence="20 22">
    <location>
        <begin position="1074"/>
        <end position="1075"/>
    </location>
</feature>
<feature type="site" description="Cleavage; by protease 3C" evidence="20 22">
    <location>
        <begin position="1396"/>
        <end position="1397"/>
    </location>
</feature>
<feature type="site" description="Cleavage; by protease 3C" evidence="20">
    <location>
        <begin position="1486"/>
        <end position="1487"/>
    </location>
</feature>
<feature type="site" description="Cleavage; by protease 3C" evidence="20">
    <location>
        <begin position="1507"/>
        <end position="1508"/>
    </location>
</feature>
<feature type="site" description="Cleavage; by protease 3C" evidence="20 22">
    <location>
        <begin position="1719"/>
        <end position="1720"/>
    </location>
</feature>
<feature type="modified residue" description="O-(5'-phospho-RNA)-tyrosine" evidence="2">
    <location>
        <position position="1489"/>
    </location>
</feature>
<feature type="lipid moiety-binding region" description="N-myristoyl glycine; by host" evidence="7">
    <location>
        <position position="80"/>
    </location>
</feature>
<feature type="mutagenesis site" description="90% loss of viral replication." evidence="18">
    <original>D</original>
    <variation>A</variation>
    <location>
        <position position="316"/>
    </location>
</feature>
<feature type="mutagenesis site" description="Complete loss of viral replication; when associated with A-332 and A-333." evidence="18">
    <original>Y</original>
    <variation>A</variation>
    <location>
        <position position="331"/>
    </location>
</feature>
<feature type="mutagenesis site" description="Complete loss of viral replication; when associated with A-331 and A-333." evidence="18">
    <original>Y</original>
    <variation>A</variation>
    <location>
        <position position="332"/>
    </location>
</feature>
<feature type="mutagenesis site" description="Complete loss of viral replication; when associated with A-331 and A-332." evidence="18">
    <original>R</original>
    <variation>A</variation>
    <location>
        <position position="333"/>
    </location>
</feature>
<feature type="mutagenesis site" description="Complete loss of viral replication; when associated with A-337." evidence="18">
    <original>N</original>
    <variation>A</variation>
    <location>
        <position position="336"/>
    </location>
</feature>
<feature type="mutagenesis site" description="Complete loss of viral replication; when associated with A-336." evidence="18">
    <original>W</original>
    <variation>A</variation>
    <location>
        <position position="337"/>
    </location>
</feature>
<feature type="mutagenesis site" description="90% loss of viral replication." evidence="18">
    <original>R</original>
    <variation>A</variation>
    <location>
        <position position="761"/>
    </location>
</feature>
<feature type="mutagenesis site" description="Complete loss of protease 3C deubiquitinating activity and ability to block IFN-beta induction." evidence="17">
    <original>H</original>
    <variation>A</variation>
    <location>
        <position position="1556"/>
    </location>
</feature>
<feature type="mutagenesis site" description="Complete loss of protease 3C deubiquitinating activity and ability to block IFN-beta induction." evidence="17">
    <original>C</original>
    <variation>A</variation>
    <location>
        <position position="1668"/>
    </location>
</feature>
<feature type="helix" evidence="29">
    <location>
        <begin position="106"/>
        <end position="109"/>
    </location>
</feature>
<feature type="strand" evidence="29">
    <location>
        <begin position="146"/>
        <end position="150"/>
    </location>
</feature>
<feature type="strand" evidence="29">
    <location>
        <begin position="165"/>
        <end position="169"/>
    </location>
</feature>
<feature type="strand" evidence="29">
    <location>
        <begin position="172"/>
        <end position="178"/>
    </location>
</feature>
<feature type="strand" evidence="29">
    <location>
        <begin position="182"/>
        <end position="188"/>
    </location>
</feature>
<feature type="helix" evidence="29">
    <location>
        <begin position="208"/>
        <end position="210"/>
    </location>
</feature>
<feature type="strand" evidence="29">
    <location>
        <begin position="214"/>
        <end position="218"/>
    </location>
</feature>
<feature type="strand" evidence="29">
    <location>
        <begin position="230"/>
        <end position="235"/>
    </location>
</feature>
<feature type="helix" evidence="29">
    <location>
        <begin position="237"/>
        <end position="241"/>
    </location>
</feature>
<feature type="helix" evidence="29">
    <location>
        <begin position="243"/>
        <end position="245"/>
    </location>
</feature>
<feature type="helix" evidence="29">
    <location>
        <begin position="249"/>
        <end position="255"/>
    </location>
</feature>
<feature type="strand" evidence="29">
    <location>
        <begin position="258"/>
        <end position="270"/>
    </location>
</feature>
<feature type="strand" evidence="29">
    <location>
        <begin position="278"/>
        <end position="288"/>
    </location>
</feature>
<feature type="strand" evidence="30">
    <location>
        <begin position="297"/>
        <end position="299"/>
    </location>
</feature>
<feature type="helix" evidence="29">
    <location>
        <begin position="302"/>
        <end position="308"/>
    </location>
</feature>
<feature type="strand" evidence="29">
    <location>
        <begin position="309"/>
        <end position="311"/>
    </location>
</feature>
<feature type="helix" evidence="29">
    <location>
        <begin position="315"/>
        <end position="319"/>
    </location>
</feature>
<feature type="turn" evidence="30">
    <location>
        <begin position="320"/>
        <end position="322"/>
    </location>
</feature>
<feature type="strand" evidence="30">
    <location>
        <begin position="330"/>
        <end position="332"/>
    </location>
</feature>
<feature type="strand" evidence="29">
    <location>
        <begin position="336"/>
        <end position="339"/>
    </location>
</feature>
<feature type="helix" evidence="29">
    <location>
        <begin position="346"/>
        <end position="351"/>
    </location>
</feature>
<feature type="strand" evidence="29">
    <location>
        <begin position="352"/>
        <end position="358"/>
    </location>
</feature>
<feature type="turn" evidence="29">
    <location>
        <begin position="359"/>
        <end position="361"/>
    </location>
</feature>
<feature type="strand" evidence="29">
    <location>
        <begin position="363"/>
        <end position="369"/>
    </location>
</feature>
<feature type="strand" evidence="29">
    <location>
        <begin position="374"/>
        <end position="379"/>
    </location>
</feature>
<feature type="turn" evidence="29">
    <location>
        <begin position="380"/>
        <end position="382"/>
    </location>
</feature>
<feature type="strand" evidence="29">
    <location>
        <begin position="385"/>
        <end position="397"/>
    </location>
</feature>
<feature type="strand" evidence="29">
    <location>
        <begin position="408"/>
        <end position="422"/>
    </location>
</feature>
<feature type="turn" evidence="29">
    <location>
        <begin position="443"/>
        <end position="446"/>
    </location>
</feature>
<feature type="strand" evidence="29">
    <location>
        <begin position="458"/>
        <end position="460"/>
    </location>
</feature>
<feature type="strand" evidence="29">
    <location>
        <begin position="474"/>
        <end position="477"/>
    </location>
</feature>
<feature type="helix" evidence="29">
    <location>
        <begin position="479"/>
        <end position="482"/>
    </location>
</feature>
<feature type="strand" evidence="29">
    <location>
        <begin position="498"/>
        <end position="501"/>
    </location>
</feature>
<feature type="strand" evidence="29">
    <location>
        <begin position="503"/>
        <end position="508"/>
    </location>
</feature>
<feature type="strand" evidence="29">
    <location>
        <begin position="518"/>
        <end position="523"/>
    </location>
</feature>
<feature type="turn" evidence="29">
    <location>
        <begin position="528"/>
        <end position="532"/>
    </location>
</feature>
<feature type="helix" evidence="29">
    <location>
        <begin position="534"/>
        <end position="539"/>
    </location>
</feature>
<feature type="strand" evidence="29">
    <location>
        <begin position="542"/>
        <end position="547"/>
    </location>
</feature>
<feature type="strand" evidence="29">
    <location>
        <begin position="549"/>
        <end position="555"/>
    </location>
</feature>
<feature type="strand" evidence="29">
    <location>
        <begin position="562"/>
        <end position="570"/>
    </location>
</feature>
<feature type="helix" evidence="29">
    <location>
        <begin position="580"/>
        <end position="583"/>
    </location>
</feature>
<feature type="strand" evidence="29">
    <location>
        <begin position="586"/>
        <end position="592"/>
    </location>
</feature>
<feature type="strand" evidence="29">
    <location>
        <begin position="594"/>
        <end position="596"/>
    </location>
</feature>
<feature type="strand" evidence="29">
    <location>
        <begin position="598"/>
        <end position="603"/>
    </location>
</feature>
<feature type="strand" evidence="29">
    <location>
        <begin position="608"/>
        <end position="615"/>
    </location>
</feature>
<feature type="turn" evidence="29">
    <location>
        <begin position="621"/>
        <end position="623"/>
    </location>
</feature>
<feature type="strand" evidence="29">
    <location>
        <begin position="627"/>
        <end position="637"/>
    </location>
</feature>
<feature type="strand" evidence="29">
    <location>
        <begin position="647"/>
        <end position="654"/>
    </location>
</feature>
<feature type="strand" evidence="29">
    <location>
        <begin position="659"/>
        <end position="663"/>
    </location>
</feature>
<feature type="helix" evidence="29">
    <location>
        <begin position="668"/>
        <end position="671"/>
    </location>
</feature>
<feature type="helix" evidence="29">
    <location>
        <begin position="678"/>
        <end position="680"/>
    </location>
</feature>
<feature type="turn" evidence="29">
    <location>
        <begin position="688"/>
        <end position="691"/>
    </location>
</feature>
<feature type="helix" evidence="29">
    <location>
        <begin position="706"/>
        <end position="710"/>
    </location>
</feature>
<feature type="strand" evidence="29">
    <location>
        <begin position="714"/>
        <end position="724"/>
    </location>
</feature>
<feature type="strand" evidence="29">
    <location>
        <begin position="760"/>
        <end position="764"/>
    </location>
</feature>
<feature type="strand" evidence="29">
    <location>
        <begin position="770"/>
        <end position="773"/>
    </location>
</feature>
<feature type="helix" evidence="29">
    <location>
        <begin position="781"/>
        <end position="786"/>
    </location>
</feature>
<feature type="strand" evidence="29">
    <location>
        <begin position="789"/>
        <end position="804"/>
    </location>
</feature>
<feature type="strand" evidence="29">
    <location>
        <begin position="810"/>
        <end position="814"/>
    </location>
</feature>
<feature type="strand" evidence="29">
    <location>
        <begin position="824"/>
        <end position="827"/>
    </location>
</feature>
<feature type="strand" evidence="29">
    <location>
        <begin position="830"/>
        <end position="833"/>
    </location>
</feature>
<feature type="helix" evidence="29">
    <location>
        <begin position="834"/>
        <end position="836"/>
    </location>
</feature>
<feature type="strand" evidence="29">
    <location>
        <begin position="837"/>
        <end position="840"/>
    </location>
</feature>
<feature type="strand" evidence="29">
    <location>
        <begin position="842"/>
        <end position="844"/>
    </location>
</feature>
<feature type="strand" evidence="29">
    <location>
        <begin position="851"/>
        <end position="855"/>
    </location>
</feature>
<feature type="strand" evidence="29">
    <location>
        <begin position="859"/>
        <end position="867"/>
    </location>
</feature>
<feature type="strand" evidence="29">
    <location>
        <begin position="872"/>
        <end position="876"/>
    </location>
</feature>
<feature type="strand" evidence="29">
    <location>
        <begin position="889"/>
        <end position="893"/>
    </location>
</feature>
<feature type="helix" evidence="29">
    <location>
        <begin position="898"/>
        <end position="900"/>
    </location>
</feature>
<feature type="strand" evidence="29">
    <location>
        <begin position="907"/>
        <end position="922"/>
    </location>
</feature>
<feature type="helix" evidence="31">
    <location>
        <begin position="1515"/>
        <end position="1523"/>
    </location>
</feature>
<feature type="strand" evidence="31">
    <location>
        <begin position="1525"/>
        <end position="1532"/>
    </location>
</feature>
<feature type="strand" evidence="31">
    <location>
        <begin position="1535"/>
        <end position="1548"/>
    </location>
</feature>
<feature type="strand" evidence="31">
    <location>
        <begin position="1550"/>
        <end position="1553"/>
    </location>
</feature>
<feature type="helix" evidence="31">
    <location>
        <begin position="1555"/>
        <end position="1559"/>
    </location>
</feature>
<feature type="strand" evidence="31">
    <location>
        <begin position="1564"/>
        <end position="1568"/>
    </location>
</feature>
<feature type="strand" evidence="31">
    <location>
        <begin position="1571"/>
        <end position="1574"/>
    </location>
</feature>
<feature type="strand" evidence="31">
    <location>
        <begin position="1580"/>
        <end position="1586"/>
    </location>
</feature>
<feature type="strand" evidence="31">
    <location>
        <begin position="1589"/>
        <end position="1597"/>
    </location>
</feature>
<feature type="helix" evidence="31">
    <location>
        <begin position="1608"/>
        <end position="1610"/>
    </location>
</feature>
<feature type="strand" evidence="31">
    <location>
        <begin position="1622"/>
        <end position="1627"/>
    </location>
</feature>
<feature type="strand" evidence="31">
    <location>
        <begin position="1631"/>
        <end position="1648"/>
    </location>
</feature>
<feature type="strand" evidence="31">
    <location>
        <begin position="1651"/>
        <end position="1661"/>
    </location>
</feature>
<feature type="helix" evidence="31">
    <location>
        <begin position="1665"/>
        <end position="1667"/>
    </location>
</feature>
<feature type="strand" evidence="31">
    <location>
        <begin position="1671"/>
        <end position="1676"/>
    </location>
</feature>
<feature type="strand" evidence="31">
    <location>
        <begin position="1679"/>
        <end position="1690"/>
    </location>
</feature>
<feature type="strand" evidence="31">
    <location>
        <begin position="1693"/>
        <end position="1698"/>
    </location>
</feature>
<feature type="helix" evidence="31">
    <location>
        <begin position="1701"/>
        <end position="1710"/>
    </location>
</feature>
<proteinExistence type="evidence at protein level"/>
<dbReference type="EC" id="3.6.4.13"/>
<dbReference type="EC" id="3.4.19.12" evidence="17"/>
<dbReference type="EC" id="3.4.22.28" evidence="11"/>
<dbReference type="EC" id="2.7.7.48" evidence="9"/>
<dbReference type="EMBL" id="DQ641257">
    <property type="protein sequence ID" value="ABG23522.1"/>
    <property type="molecule type" value="Genomic_RNA"/>
</dbReference>
<dbReference type="RefSeq" id="YP_002268402.1">
    <property type="nucleotide sequence ID" value="NC_011349.1"/>
</dbReference>
<dbReference type="PDB" id="3CJI">
    <property type="method" value="X-ray"/>
    <property type="resolution" value="2.30 A"/>
    <property type="chains" value="A=674-936, B=435-673, C=151-434, D=80-150"/>
</dbReference>
<dbReference type="PDB" id="6ADL">
    <property type="method" value="EM"/>
    <property type="resolution" value="3.08 A"/>
    <property type="chains" value="B=182-427"/>
</dbReference>
<dbReference type="PDB" id="6CX1">
    <property type="method" value="EM"/>
    <property type="resolution" value="3.80 A"/>
    <property type="chains" value="A=674-931, B=435-672, C=162-429, D=93-150"/>
</dbReference>
<dbReference type="PDB" id="6L0T">
    <property type="method" value="X-ray"/>
    <property type="resolution" value="1.90 A"/>
    <property type="chains" value="A/B=1509-1719"/>
</dbReference>
<dbReference type="PDBsum" id="3CJI"/>
<dbReference type="PDBsum" id="6ADL"/>
<dbReference type="PDBsum" id="6CX1"/>
<dbReference type="PDBsum" id="6L0T"/>
<dbReference type="EMDB" id="EMD-9607"/>
<dbReference type="SMR" id="Q155Z9"/>
<dbReference type="DIP" id="DIP-46244N"/>
<dbReference type="IntAct" id="Q155Z9">
    <property type="interactions" value="1"/>
</dbReference>
<dbReference type="GeneID" id="6966369"/>
<dbReference type="KEGG" id="vg:6966369"/>
<dbReference type="EvolutionaryTrace" id="Q155Z9"/>
<dbReference type="Proteomes" id="UP000000672">
    <property type="component" value="Segment"/>
</dbReference>
<dbReference type="GO" id="GO:0044162">
    <property type="term" value="C:host cell cytoplasmic vesicle membrane"/>
    <property type="evidence" value="ECO:0007669"/>
    <property type="project" value="UniProtKB-SubCell"/>
</dbReference>
<dbReference type="GO" id="GO:0044196">
    <property type="term" value="C:host cell nucleolus"/>
    <property type="evidence" value="ECO:0007669"/>
    <property type="project" value="UniProtKB-SubCell"/>
</dbReference>
<dbReference type="GO" id="GO:0016020">
    <property type="term" value="C:membrane"/>
    <property type="evidence" value="ECO:0007669"/>
    <property type="project" value="UniProtKB-KW"/>
</dbReference>
<dbReference type="GO" id="GO:0039618">
    <property type="term" value="C:T=pseudo3 icosahedral viral capsid"/>
    <property type="evidence" value="ECO:0007669"/>
    <property type="project" value="UniProtKB-KW"/>
</dbReference>
<dbReference type="GO" id="GO:0005524">
    <property type="term" value="F:ATP binding"/>
    <property type="evidence" value="ECO:0007669"/>
    <property type="project" value="UniProtKB-KW"/>
</dbReference>
<dbReference type="GO" id="GO:0016887">
    <property type="term" value="F:ATP hydrolysis activity"/>
    <property type="evidence" value="ECO:0007669"/>
    <property type="project" value="RHEA"/>
</dbReference>
<dbReference type="GO" id="GO:0015267">
    <property type="term" value="F:channel activity"/>
    <property type="evidence" value="ECO:0007669"/>
    <property type="project" value="UniProtKB-KW"/>
</dbReference>
<dbReference type="GO" id="GO:0004843">
    <property type="term" value="F:cysteine-type deubiquitinase activity"/>
    <property type="evidence" value="ECO:0007669"/>
    <property type="project" value="UniProtKB-EC"/>
</dbReference>
<dbReference type="GO" id="GO:0004197">
    <property type="term" value="F:cysteine-type endopeptidase activity"/>
    <property type="evidence" value="ECO:0007669"/>
    <property type="project" value="UniProtKB-EC"/>
</dbReference>
<dbReference type="GO" id="GO:0003723">
    <property type="term" value="F:RNA binding"/>
    <property type="evidence" value="ECO:0007669"/>
    <property type="project" value="UniProtKB-KW"/>
</dbReference>
<dbReference type="GO" id="GO:0003724">
    <property type="term" value="F:RNA helicase activity"/>
    <property type="evidence" value="ECO:0007669"/>
    <property type="project" value="UniProtKB-EC"/>
</dbReference>
<dbReference type="GO" id="GO:0003968">
    <property type="term" value="F:RNA-directed RNA polymerase activity"/>
    <property type="evidence" value="ECO:0007669"/>
    <property type="project" value="UniProtKB-KW"/>
</dbReference>
<dbReference type="GO" id="GO:0005198">
    <property type="term" value="F:structural molecule activity"/>
    <property type="evidence" value="ECO:0007669"/>
    <property type="project" value="InterPro"/>
</dbReference>
<dbReference type="GO" id="GO:0098671">
    <property type="term" value="P:adhesion receptor-mediated virion attachment to host cell"/>
    <property type="evidence" value="ECO:0007669"/>
    <property type="project" value="UniProtKB-KW"/>
</dbReference>
<dbReference type="GO" id="GO:0006351">
    <property type="term" value="P:DNA-templated transcription"/>
    <property type="evidence" value="ECO:0007669"/>
    <property type="project" value="InterPro"/>
</dbReference>
<dbReference type="GO" id="GO:0098670">
    <property type="term" value="P:entry receptor-mediated virion attachment to host cell"/>
    <property type="evidence" value="ECO:0007669"/>
    <property type="project" value="UniProtKB-KW"/>
</dbReference>
<dbReference type="GO" id="GO:0034220">
    <property type="term" value="P:monoatomic ion transmembrane transport"/>
    <property type="evidence" value="ECO:0007669"/>
    <property type="project" value="UniProtKB-KW"/>
</dbReference>
<dbReference type="GO" id="GO:0006508">
    <property type="term" value="P:proteolysis"/>
    <property type="evidence" value="ECO:0007669"/>
    <property type="project" value="UniProtKB-KW"/>
</dbReference>
<dbReference type="GO" id="GO:0046718">
    <property type="term" value="P:symbiont entry into host cell"/>
    <property type="evidence" value="ECO:0007669"/>
    <property type="project" value="UniProtKB-KW"/>
</dbReference>
<dbReference type="GO" id="GO:0039548">
    <property type="term" value="P:symbiont-mediated suppression of host cytoplasmic pattern recognition receptor signaling pathway via inhibition of IRF3 activity"/>
    <property type="evidence" value="ECO:0007669"/>
    <property type="project" value="UniProtKB-KW"/>
</dbReference>
<dbReference type="GO" id="GO:0039557">
    <property type="term" value="P:symbiont-mediated suppression of host cytoplasmic pattern recognition receptor signaling pathway via inhibition of IRF7 activity"/>
    <property type="evidence" value="ECO:0007669"/>
    <property type="project" value="UniProtKB-KW"/>
</dbReference>
<dbReference type="GO" id="GO:0039545">
    <property type="term" value="P:symbiont-mediated suppression of host cytoplasmic pattern recognition receptor signaling pathway via inhibition of MAVS activity"/>
    <property type="evidence" value="ECO:0007669"/>
    <property type="project" value="UniProtKB-KW"/>
</dbReference>
<dbReference type="GO" id="GO:0039540">
    <property type="term" value="P:symbiont-mediated suppression of host cytoplasmic pattern recognition receptor signaling pathway via inhibition of RIG-I activity"/>
    <property type="evidence" value="ECO:0000314"/>
    <property type="project" value="UniProtKB"/>
</dbReference>
<dbReference type="GO" id="GO:0039723">
    <property type="term" value="P:symbiont-mediated suppression of host cytoplasmic pattern recognition receptor signaling pathway via inhibition of TBK1 activity"/>
    <property type="evidence" value="ECO:0000314"/>
    <property type="project" value="UniProtKB"/>
</dbReference>
<dbReference type="GO" id="GO:0039722">
    <property type="term" value="P:symbiont-mediated suppression of host toll-like receptor signaling pathway"/>
    <property type="evidence" value="ECO:0007669"/>
    <property type="project" value="UniProtKB-KW"/>
</dbReference>
<dbReference type="GO" id="GO:0039527">
    <property type="term" value="P:symbiont-mediated suppression of host TRAF-mediated signal transduction"/>
    <property type="evidence" value="ECO:0007669"/>
    <property type="project" value="UniProtKB-KW"/>
</dbReference>
<dbReference type="GO" id="GO:0039694">
    <property type="term" value="P:viral RNA genome replication"/>
    <property type="evidence" value="ECO:0007669"/>
    <property type="project" value="InterPro"/>
</dbReference>
<dbReference type="CDD" id="cd00205">
    <property type="entry name" value="rhv_like"/>
    <property type="match status" value="2"/>
</dbReference>
<dbReference type="FunFam" id="2.60.120.20:FF:000009">
    <property type="entry name" value="Genome polyprotein"/>
    <property type="match status" value="1"/>
</dbReference>
<dbReference type="FunFam" id="3.30.70.270:FF:000046">
    <property type="entry name" value="Genome polyprotein"/>
    <property type="match status" value="1"/>
</dbReference>
<dbReference type="Gene3D" id="1.20.960.20">
    <property type="match status" value="1"/>
</dbReference>
<dbReference type="Gene3D" id="2.60.120.20">
    <property type="match status" value="3"/>
</dbReference>
<dbReference type="Gene3D" id="3.30.70.270">
    <property type="match status" value="1"/>
</dbReference>
<dbReference type="Gene3D" id="4.10.90.10">
    <property type="entry name" value="Capsid protein VP4 superfamily, Picornavirus"/>
    <property type="match status" value="1"/>
</dbReference>
<dbReference type="Gene3D" id="2.40.10.10">
    <property type="entry name" value="Trypsin-like serine proteases"/>
    <property type="match status" value="1"/>
</dbReference>
<dbReference type="InterPro" id="IPR037080">
    <property type="entry name" value="Capsid_VP4_sf_Picornavirus"/>
</dbReference>
<dbReference type="InterPro" id="IPR043502">
    <property type="entry name" value="DNA/RNA_pol_sf"/>
</dbReference>
<dbReference type="InterPro" id="IPR004004">
    <property type="entry name" value="Helic/Pol/Pept_Calicivir-typ"/>
</dbReference>
<dbReference type="InterPro" id="IPR000605">
    <property type="entry name" value="Helicase_SF3_ssDNA/RNA_vir"/>
</dbReference>
<dbReference type="InterPro" id="IPR014759">
    <property type="entry name" value="Helicase_SF3_ssRNA_vir"/>
</dbReference>
<dbReference type="InterPro" id="IPR027417">
    <property type="entry name" value="P-loop_NTPase"/>
</dbReference>
<dbReference type="InterPro" id="IPR044067">
    <property type="entry name" value="PCV_3C_PRO"/>
</dbReference>
<dbReference type="InterPro" id="IPR000199">
    <property type="entry name" value="Peptidase_C3A/C3B_picornavir"/>
</dbReference>
<dbReference type="InterPro" id="IPR009003">
    <property type="entry name" value="Peptidase_S1_PA"/>
</dbReference>
<dbReference type="InterPro" id="IPR043504">
    <property type="entry name" value="Peptidase_S1_PA_chymotrypsin"/>
</dbReference>
<dbReference type="InterPro" id="IPR001676">
    <property type="entry name" value="Picornavirus_capsid"/>
</dbReference>
<dbReference type="InterPro" id="IPR043128">
    <property type="entry name" value="Rev_trsase/Diguanyl_cyclase"/>
</dbReference>
<dbReference type="InterPro" id="IPR033703">
    <property type="entry name" value="Rhv-like"/>
</dbReference>
<dbReference type="InterPro" id="IPR001205">
    <property type="entry name" value="RNA-dir_pol_C"/>
</dbReference>
<dbReference type="InterPro" id="IPR007094">
    <property type="entry name" value="RNA-dir_pol_PSvirus"/>
</dbReference>
<dbReference type="InterPro" id="IPR029053">
    <property type="entry name" value="Viral_coat"/>
</dbReference>
<dbReference type="Pfam" id="PF00548">
    <property type="entry name" value="Peptidase_C3"/>
    <property type="match status" value="1"/>
</dbReference>
<dbReference type="Pfam" id="PF00680">
    <property type="entry name" value="RdRP_1"/>
    <property type="match status" value="1"/>
</dbReference>
<dbReference type="Pfam" id="PF00073">
    <property type="entry name" value="Rhv"/>
    <property type="match status" value="2"/>
</dbReference>
<dbReference type="Pfam" id="PF22663">
    <property type="entry name" value="Rhv_5"/>
    <property type="match status" value="1"/>
</dbReference>
<dbReference type="Pfam" id="PF00910">
    <property type="entry name" value="RNA_helicase"/>
    <property type="match status" value="1"/>
</dbReference>
<dbReference type="PRINTS" id="PR00918">
    <property type="entry name" value="CALICVIRUSNS"/>
</dbReference>
<dbReference type="SUPFAM" id="SSF56672">
    <property type="entry name" value="DNA/RNA polymerases"/>
    <property type="match status" value="1"/>
</dbReference>
<dbReference type="SUPFAM" id="SSF52540">
    <property type="entry name" value="P-loop containing nucleoside triphosphate hydrolases"/>
    <property type="match status" value="1"/>
</dbReference>
<dbReference type="SUPFAM" id="SSF88633">
    <property type="entry name" value="Positive stranded ssRNA viruses"/>
    <property type="match status" value="2"/>
</dbReference>
<dbReference type="SUPFAM" id="SSF50494">
    <property type="entry name" value="Trypsin-like serine proteases"/>
    <property type="match status" value="1"/>
</dbReference>
<dbReference type="PROSITE" id="PS51874">
    <property type="entry name" value="PCV_3C_PRO"/>
    <property type="match status" value="1"/>
</dbReference>
<dbReference type="PROSITE" id="PS50507">
    <property type="entry name" value="RDRP_SSRNA_POS"/>
    <property type="match status" value="1"/>
</dbReference>
<dbReference type="PROSITE" id="PS51218">
    <property type="entry name" value="SF3_HELICASE_2"/>
    <property type="match status" value="1"/>
</dbReference>
<name>POLG_SVV1</name>
<comment type="function">
    <molecule>Capsid protein VP1</molecule>
    <text evidence="6 13 16 18 22">Forms an icosahedral capsid of pseudo T=3 symmetry with capsid proteins VP2 and VP3 (PubMed:18940610). Together they form an icosahedral capsid composed of 60 copies of each VP1, VP2, and VP3, with a diameter of approximately 325 Angstroms (Probable). VP4 lies on the inner surface of the protein shell formed by VP1, VP2 and VP3 (By similarity). All the three latter proteins contain a beta-sheet structure called beta-barrel jelly roll (By similarity). VP1 is situated at the 12 fivefold axes, whereas VP2 and VP3 are located at the quasi-sixfold axes (PubMed:18940610). Binds the host receptor ANTXR1 for attachment and uncoating (entry) (PubMed:30381454, PubMed:30514821).</text>
</comment>
<comment type="function">
    <molecule>Capsid protein VP2</molecule>
    <text evidence="6 13 16 18 22">Forms an icosahedral capsid of pseudo T=3 symmetry with capsid proteins VP2 and VP3 (PubMed:18940610). Together they form an icosahedral capsid composed of 60 copies of each VP1, VP2, and VP3, with a diameter of approximately 270 Angstroms (Probable). VP4 lies on the inner surface of the protein shell formed by VP1, VP2 and VP3 (By similarity). All the three latter proteins contain a beta-sheet structure called beta-barrel jelly roll (By similarity). VP1 is situated at the 12 fivefold axes, whereas VP2 and VP3 are located at the quasi-sixfold axes (PubMed:18940610). Binds the host receptor ANTXR1 for attachment and uncoating (entry) (PubMed:30381454, PubMed:30514821).</text>
</comment>
<comment type="function">
    <molecule>Capsid protein VP3</molecule>
    <text evidence="6 16 22">Forms an icosahedral capsid of pseudo T=3 symmetry with capsid proteins VP2 and VP3 (Probable). Together they form an icosahedral capsid composed of 60 copies of each VP1, VP2, and VP3, with a diameter of approximately 270 Angstroms (Probable). VP4 lies on the inner surface of the protein shell formed by VP1, VP2 and VP3. All the three latter proteins contain a beta-sheet structure called beta-barrel jelly roll (By similarity). VP1 is situated at the 12 fivefold axes, whereas VP2 and VP3 are located at the quasi-sixfold axes (By similarity). Vp3 also seems to be involved in the binding to host receptor ANTXR1 for attachment and uncoating (entry) (PubMed:30381454).</text>
</comment>
<comment type="function">
    <molecule>Capsid protein VP4</molecule>
    <text evidence="6 23">Lies on the inner surface of the capsid shell (PubMed:18940610). After binding to the host receptor, the capsid undergoes conformational changes (By similarity). Capsid protein VP4 is released, capsid protein VP1 N-terminus is externalized, and together, they shape a pore in the host membrane through which the viral genome is translocated into the host cell cytoplasm (By similarity). After genome has been released, the channel shrinks (By similarity).</text>
</comment>
<comment type="function">
    <molecule>Capsid protein VP0</molecule>
    <text evidence="5">VP0 precursor is a component of immature procapsids.</text>
</comment>
<comment type="function">
    <molecule>Protein 2A</molecule>
    <text evidence="4">Mediates self-processing of the polyprotein by a translational effect termed 'ribosome skipping'. Mechanistically, 2A-mediated cleavage occurs between the C-terminal glycine and the proline of the downstream protein 2B.</text>
</comment>
<comment type="function">
    <molecule>Protein 2B</molecule>
    <text evidence="4">Plays an essential role in the virus replication cycle by acting as a viroporin. Creates a pore in the host endoplasmic reticulum and as a consequence releases Ca2+ in the cytoplasm of infected cell. In turn, high levels of cytoplasmic calcium may trigger membrane trafficking and transport of viral ER-associated proteins to viroplasms, sites of viral genome replication.</text>
</comment>
<comment type="function">
    <molecule>Protein 2C</molecule>
    <text evidence="4">Associates with and induces structural rearrangements of intracellular membranes.</text>
</comment>
<comment type="function">
    <molecule>VPg</molecule>
    <text evidence="4">Covalently linked to the 5'-end of both the positive-strand and negative-strand genomic RNAs. Acts as a genome-linked replication primer.</text>
</comment>
<comment type="function">
    <molecule>Protease 3C</molecule>
    <text evidence="6 14 15 17 19">Cysteine protease that generates mature viral proteins from the precursor polyprotein (By similarity). Inactivates crucial host adapter molecules in order to suppress antiviral type-I interferon (type-I IFN) and NF-kappaB production to escape host antiviral innate immune responses (PubMed:28566380, PubMed:29427864, PubMed:30408499). Deubiquitinase that acts on both lysine-48- and lysine-63-linked polyubiquitin chains and inhibits the ubiquitination of the ATP-dependent RNA helicase RIGI, TANK-binding kinase 1 (TBK1), and TNF receptor-associated factor 3 (TRAF3), thereby blocking the expression of IFN-beta and IFN stimulated gene 54 (ISG54) (PubMed:30408499). Induces host IRF3 and IRF7 degradation thereby suppressing IRF3- and IRF7-induced type-I IFN production (PubMed:29427864). Also decreases host IRF3 phosphorylation leading to negligible IRF3 activation (PubMed:29427864). Cleaves host MAVS, TRIF and TANK, which are then unable to regulate pattern recognition receptor (PRR)-mediated type-I IFN production (PubMed:28566380). Inhibits the integrated stress response (ISR) in the infected cell by disrupting eIF4GI-G3BP1 interaction (PubMed:33133097). Stress granule formation is thus inhibited (PubMed:33133097).</text>
</comment>
<comment type="function">
    <molecule>RNA-directed RNA polymerase</molecule>
    <text evidence="6">Replicates the genomic and antigenomic RNAs by recognizing replications specific signals (By similarity). Performs VPg uridylylation (By similarity).</text>
</comment>
<comment type="catalytic activity">
    <reaction evidence="9">
        <text>RNA(n) + a ribonucleoside 5'-triphosphate = RNA(n+1) + diphosphate</text>
        <dbReference type="Rhea" id="RHEA:21248"/>
        <dbReference type="Rhea" id="RHEA-COMP:14527"/>
        <dbReference type="Rhea" id="RHEA-COMP:17342"/>
        <dbReference type="ChEBI" id="CHEBI:33019"/>
        <dbReference type="ChEBI" id="CHEBI:61557"/>
        <dbReference type="ChEBI" id="CHEBI:140395"/>
        <dbReference type="EC" id="2.7.7.48"/>
    </reaction>
</comment>
<comment type="catalytic activity">
    <reaction evidence="11">
        <text>Selective cleavage of Gln-|-Gly bond in the poliovirus polyprotein. In other picornavirus reactions Glu may be substituted for Gln, and Ser or Thr for Gly.</text>
        <dbReference type="EC" id="3.4.22.28"/>
    </reaction>
</comment>
<comment type="catalytic activity">
    <reaction evidence="17">
        <text>Thiol-dependent hydrolysis of ester, thioester, amide, peptide and isopeptide bonds formed by the C-terminal Gly of ubiquitin (a 76-residue protein attached to proteins as an intracellular targeting signal).</text>
        <dbReference type="EC" id="3.4.19.12"/>
    </reaction>
</comment>
<comment type="catalytic activity">
    <reaction evidence="21">
        <text>ATP + H2O = ADP + phosphate + H(+)</text>
        <dbReference type="Rhea" id="RHEA:13065"/>
        <dbReference type="ChEBI" id="CHEBI:15377"/>
        <dbReference type="ChEBI" id="CHEBI:15378"/>
        <dbReference type="ChEBI" id="CHEBI:30616"/>
        <dbReference type="ChEBI" id="CHEBI:43474"/>
        <dbReference type="ChEBI" id="CHEBI:456216"/>
        <dbReference type="EC" id="3.6.4.13"/>
    </reaction>
</comment>
<comment type="subunit">
    <molecule>Capsid protein VP1</molecule>
    <text evidence="16 18">Interacts with host entry receptor ANTRX1.</text>
</comment>
<comment type="subunit">
    <molecule>Capsid protein VP2</molecule>
    <text evidence="16 18">Interacts with host entry receptor ANTRX1.</text>
</comment>
<comment type="subunit">
    <molecule>Capsid protein VP3</molecule>
    <text evidence="16">Interacts with host entry receptor ANTRX1.</text>
</comment>
<comment type="subunit">
    <molecule>Protease 3C</molecule>
    <text evidence="14 15 17">Interacts with host IRF3; this interaction is involved in the suppression of IRF3 and IRF7 expression and phosphorylation by the virus (PubMed:29427864). Interacts with host IRF7; this interaction is involved in the suppression of IRF3 and IRF7 expression and phosphorylation by the virus (PubMed:29427864). Interacts with host MAVS; this interaction allows the cleavage of MAVS and subsequent suppression of host immunity (PubMed:28566380). Interacts with host TRIF; this interaction allows the cleavage of TRIF and subsequent suppression of host immunity (PubMed:28566380). Interacts with host TANK; this interaction allows the cleavage of TANK and subsequent suppression of host immunity (PubMed:28566380). Interacts with host RIGI (PubMed:30408499). Interacts with host TBK1 (PubMed:30408499). Interacts with host TRAF3 (PubMed:30408499).</text>
</comment>
<comment type="subcellular location">
    <molecule>Capsid protein VP2</molecule>
    <subcellularLocation>
        <location evidence="6">Virion</location>
    </subcellularLocation>
    <subcellularLocation>
        <location evidence="1">Host cytoplasm</location>
    </subcellularLocation>
</comment>
<comment type="subcellular location">
    <molecule>Capsid protein VP3</molecule>
    <subcellularLocation>
        <location evidence="6">Virion</location>
    </subcellularLocation>
    <subcellularLocation>
        <location evidence="1">Host cytoplasm</location>
    </subcellularLocation>
</comment>
<comment type="subcellular location">
    <molecule>Capsid protein VP1</molecule>
    <subcellularLocation>
        <location evidence="6">Virion</location>
    </subcellularLocation>
    <subcellularLocation>
        <location evidence="1">Host cytoplasm</location>
    </subcellularLocation>
</comment>
<comment type="subcellular location">
    <molecule>Protein 2A</molecule>
    <subcellularLocation>
        <location evidence="8">Host nucleus</location>
        <location evidence="8">Host nucleolus</location>
    </subcellularLocation>
</comment>
<comment type="subcellular location">
    <molecule>Protein 2B</molecule>
    <subcellularLocation>
        <location evidence="8">Host cytoplasmic vesicle membrane</location>
        <topology evidence="8">Peripheral membrane protein</topology>
        <orientation evidence="8">Cytoplasmic side</orientation>
    </subcellularLocation>
    <text evidence="1">Probably localizes to the surface of intracellular membrane vesicles that are induced after virus infection as the site for viral RNA replication. These vesicles are probably autophagosome-like vesicles.</text>
</comment>
<comment type="subcellular location">
    <molecule>Protein 2C</molecule>
    <subcellularLocation>
        <location evidence="8">Host cytoplasmic vesicle membrane</location>
        <topology evidence="8">Peripheral membrane protein</topology>
        <orientation evidence="8">Cytoplasmic side</orientation>
    </subcellularLocation>
    <text evidence="1">Probably localizes to the surface of intracellular membrane vesicles that are induced after virus infection as the site for viral RNA replication. These vesicles are probably autophagosome-like vesicles.</text>
</comment>
<comment type="subcellular location">
    <molecule>Protein 3A</molecule>
    <subcellularLocation>
        <location evidence="3">Host cytoplasmic vesicle membrane</location>
        <topology evidence="1">Peripheral membrane protein</topology>
        <orientation evidence="1">Cytoplasmic side</orientation>
    </subcellularLocation>
    <text evidence="1">Probably localizes to the surface of intracellular membrane vesicles that are induced after virus infection as the site for viral RNA replication. These vesicles are probably autophagosome-like vesicles.</text>
</comment>
<comment type="subcellular location">
    <molecule>VPg</molecule>
    <subcellularLocation>
        <location evidence="1">Virion</location>
    </subcellularLocation>
</comment>
<comment type="subcellular location">
    <molecule>Protease 3C</molecule>
    <subcellularLocation>
        <location evidence="1">Host cytoplasm</location>
    </subcellularLocation>
</comment>
<comment type="subcellular location">
    <molecule>RNA-directed RNA polymerase</molecule>
    <subcellularLocation>
        <location evidence="8">Host cytoplasmic vesicle membrane</location>
        <topology evidence="8">Peripheral membrane protein</topology>
        <orientation evidence="8">Cytoplasmic side</orientation>
    </subcellularLocation>
    <text evidence="1">Probably localizes to the surface of intracellular membrane vesicles that are induced after virus infection as the site for viral RNA replication. These vesicles are probably autophagosome-like vesicles.</text>
</comment>
<comment type="PTM">
    <molecule>Genome polyprotein</molecule>
    <text evidence="3 22">Specific enzymatic cleavages by the viral protease in vivo yield a variety of precursors and mature proteins (Probable). The polyprotein seems to be cotranslationally cleaved at the 2A/2B junction by a ribosomal skip from one codon to the next without formation of a peptide bond (By similarity). This process would release the P1-2A peptide from the translational complex (By similarity).</text>
</comment>
<comment type="PTM">
    <molecule>Capsid protein VP0</molecule>
    <text evidence="2">During virion maturation, immature virions are rendered infectious following cleavage of VP0 into VP4 and VP2. This maturation seems to be an autocatalytic event triggered by the presence of RNA in the capsid and is followed by a conformational change of the particle.</text>
</comment>
<comment type="PTM">
    <molecule>Capsid protein VP4</molecule>
    <text evidence="7">Myristoylation is required during RNA encapsidation and formation of the mature virus particle.</text>
</comment>
<comment type="PTM">
    <molecule>VPg</molecule>
    <text evidence="6">Uridylylated by the polymerase and is covalently linked to the 5'-end of genomic RNA. This uridylylated form acts as a nucleotide-peptide primer for the polymerase.</text>
</comment>
<organism evidence="24">
    <name type="scientific">Seneca Valley virus (isolate -/United States/SSV-001/2002)</name>
    <name type="common">SVV</name>
    <dbReference type="NCBI Taxonomy" id="686944"/>
    <lineage>
        <taxon>Viruses</taxon>
        <taxon>Riboviria</taxon>
        <taxon>Orthornavirae</taxon>
        <taxon>Pisuviricota</taxon>
        <taxon>Pisoniviricetes</taxon>
        <taxon>Picornavirales</taxon>
        <taxon>Picornaviridae</taxon>
        <taxon>Caphthovirinae</taxon>
        <taxon>Senecavirus</taxon>
        <taxon>Senecavirus valles</taxon>
    </lineage>
</organism>
<protein>
    <recommendedName>
        <fullName>Genome polyprotein</fullName>
    </recommendedName>
    <component>
        <recommendedName>
            <fullName>Leader protein</fullName>
        </recommendedName>
    </component>
    <component>
        <recommendedName>
            <fullName>Capsid protein VP0</fullName>
        </recommendedName>
        <alternativeName>
            <fullName>VP4-VP2</fullName>
        </alternativeName>
    </component>
    <component>
        <recommendedName>
            <fullName>Capsid protein VP4</fullName>
        </recommendedName>
        <alternativeName>
            <fullName>P1A</fullName>
        </alternativeName>
        <alternativeName>
            <fullName>Rho</fullName>
        </alternativeName>
        <alternativeName>
            <fullName>Virion protein 4</fullName>
        </alternativeName>
    </component>
    <component>
        <recommendedName>
            <fullName>Capsid protein VP2</fullName>
        </recommendedName>
        <alternativeName>
            <fullName>Beta</fullName>
        </alternativeName>
        <alternativeName>
            <fullName>P1B</fullName>
        </alternativeName>
        <alternativeName>
            <fullName>Virion protein 2</fullName>
        </alternativeName>
    </component>
    <component>
        <recommendedName>
            <fullName>Capsid protein VP3</fullName>
        </recommendedName>
        <alternativeName>
            <fullName>Gamma</fullName>
        </alternativeName>
        <alternativeName>
            <fullName>P1C</fullName>
        </alternativeName>
        <alternativeName>
            <fullName>Virion protein 3</fullName>
        </alternativeName>
    </component>
    <component>
        <recommendedName>
            <fullName>Capsid protein VP1</fullName>
        </recommendedName>
        <alternativeName>
            <fullName>Alpha</fullName>
        </alternativeName>
        <alternativeName>
            <fullName>P1D</fullName>
        </alternativeName>
        <alternativeName>
            <fullName>Virion protein 1</fullName>
        </alternativeName>
    </component>
    <component>
        <recommendedName>
            <fullName>Protein 2A</fullName>
            <shortName>P2A</shortName>
        </recommendedName>
    </component>
    <component>
        <recommendedName>
            <fullName>Protein 2B</fullName>
            <shortName>P2B</shortName>
        </recommendedName>
    </component>
    <component>
        <recommendedName>
            <fullName>Protein 2C</fullName>
            <shortName>P2C</shortName>
            <ecNumber>3.6.4.13</ecNumber>
        </recommendedName>
    </component>
    <component>
        <recommendedName>
            <fullName>Protein 3A</fullName>
            <shortName>P3A</shortName>
        </recommendedName>
    </component>
    <component>
        <recommendedName>
            <fullName>VPg</fullName>
        </recommendedName>
        <alternativeName>
            <fullName>Protein 3B</fullName>
            <shortName>P3B</shortName>
        </alternativeName>
        <alternativeName>
            <fullName>Viral protein genome-linked</fullName>
        </alternativeName>
    </component>
    <component>
        <recommendedName>
            <fullName evidence="11">Protease 3C</fullName>
            <shortName evidence="11">P3C</shortName>
            <ecNumber evidence="17">3.4.19.12</ecNumber>
            <ecNumber evidence="11">3.4.22.28</ecNumber>
        </recommendedName>
        <alternativeName>
            <fullName evidence="11">Picornain 3C</fullName>
        </alternativeName>
        <alternativeName>
            <fullName>p22</fullName>
        </alternativeName>
    </component>
    <component>
        <recommendedName>
            <fullName evidence="9">RNA-directed RNA polymerase</fullName>
            <shortName>RdRp</shortName>
            <ecNumber evidence="9">2.7.7.48</ecNumber>
        </recommendedName>
        <alternativeName>
            <fullName>3D polymerase</fullName>
            <shortName>3Dpol</shortName>
        </alternativeName>
        <alternativeName>
            <fullName>Protein 3D</fullName>
            <shortName>3D</shortName>
        </alternativeName>
    </component>
</protein>
<sequence>MQNSHFSFDTASGTFEDVTGTKVKIVEYPRSVNNGVYDSSTHLEILNLQGEIEILRSFNEYQIRAAKQQLGLDIVYELQGNVQTTSKNDFDSRGNNGNMTFNYYANTYQNSVDFSTSSSASGAGPGNSRGGLAGLLTNFSGILNPLGYLKDHNTEEMENSADRVTTQTAGNTAINTQSSLGVLCAYVEDPTKSDPPSSSTDQPTTTFTAIDRWYTGRLNSWTKAVKTFSFQAVPLPGAFLSRQGGLNGGAFTATLHRHFLMKCGWQVQVQCNLTQFHQGALLVAMVPETTLDVKPDGKAKSLQELNEEQWVEMSDDYRTGKNMPFQSLGTYYRPPNWTWGPNFINPYQVTVFPHQILNARTSTSVDINVPYIGETPTQSSETQNSWTLLVMVLVPLDYKEGATTDPEITFSVRPTSPYFNGLRNRYTAGTDEEQGPIPTAPRENSLMFLSTLPDDTVPAYGNVRTPPVNYLPGEITDLLQLARIPTLMAFERVPEPVPASDTYVPYVAVPTQFDDRPLISFPITLSDPVYQNTLVGAISSNFANYRGCIQITLTFCGPMMARGKFLLSYSPPNGTQPQTLSEAMQCTYSIWDIGLNSSWTFVVPYISPSDYRETRAITNSVYSADGWFSLHKLTKITLPPDCPQSPCILFFASAGEDYTLRLPVDCNPSYVFHSTDNAETGVIEAGNTDTDFSGELAAPGSNHTNVKFLFDRSRLLNVIKVLEKDAVFPRPFPTQEGAQQDDGYFCLLTPRPTVASRPATRFGLYANPSGSGVLANTSLDFNFYSLACFTYFRSDLEVTVVSLEPDLEFAVGWFPSGSEYQASSFVYDQLHVPFHFTGRTPRAFASKGGKVSFVLPWNSVSSVLPVRWGGASKLSSATRGLPAHADWGTIYAFVPRPNEKKSTAVKHVAVYIRYKNARAWCPSMLPFRSYKQKMLMQSGDIETNPGPASDNPILEFLEAENDLVTLASLWKMVHSVQQTWRKYVKNDDFWPNLLSELVGEGSVALAATLSNQASVKALLGLHFLSRGLNYTDFYSLLIEKCSSFFTVEPPPPPAENLMTKPSVKSKFRKLFKMQGPMDKVKDWNQIAAGLKNFQFVRDLVKEVVDWLQAWINKEKASPVLQYQLEMKKLGPVALAHDAFMAGSGPPLSDDQIEYLQNLKSLALTLGKTNLAQSLTTMINAKQSSAQRVEPVVVVLRGKPGCGKSLASTLIAQAVSKRLYGSQSVYSLPPDPDFFDGYKGQFVTLMDDLGQNPDGQDFSTFCQMVSTAQFLPNMADLAEKGRPFTSNLIIATTNLPHFSPVTIADPSAVSRRINYDLTLEVSEAYKKHTRLNFDLAFRRTDAPPIYPFAAHVPFVDVAVRFKNGHQNFNLLELVDSICTDIRAKQQGARNMQTLVLQSPNENDDTPVDEALGRVLSPAAVDEALVDLTPEADPVGRLAILAKLGLALAAVTPGLIILAVGLYRYFSGSDADQEETESEGSVKAPRSENAYDGPKKNSKPPGALSLMEMQQPNVDMGFEAAVAKKVVVPITFMVPNRPSGLTQSALLVTGRTFLINEHTWSNPSWTSFTIRGEVHTRDEPFQTVHFTHHGIPTDLMMVRLGPGNSFPNNLDKFGLDQMPARNSRVVGVSSSYGNFFFSGNFLGFVDSITSEQGTYARLFRYRVTTYKGWCGSALVCEAGGVRRIIGLHSAGAAGIGAGTYISKLGLIKALKHLGEPLATMQGLMTELEPGITVHVPRKSKLRKTTAHAVYKPEFEPAVLSKFDPRLNKDVDLDEVIWSKHTANVPYQPPLFYTYMSEYAHRVFSFLGKDNDILTVKEAILGIPGLDPMDPHTAPGLPYAINGLRRTDLVDFVNGTVDAALAVQIQKFLDGDYSDHVFQTFLKDEIRPSEKVRAGKTRIVDVPSLAHCIVGRMLLGRFAAKFQSHPGFLLGSAIGSDPDVFWTVIGAQLEGRKNTYDVDYSAFDSSHGTGSFEALISHFFTVDNGFSPALGPYLRSLAVSVHAYGERRIKITGGLPSGCAATSLLNTVLNNVIIRTALALTYKEFEYDMVDIIAYGDDLLVGTDYDLDFNEVARRAAKLGYKMTPANKGSVFPPTSSLSDAVFLKRKFVQNNDGLYKPVMDLKNLEAMLSYFKPGTLLEKLQSVSMLAQHSGKEEYDRLMHPFADYGAVPSHEYLQARWRALFD</sequence>
<reference key="1">
    <citation type="journal article" date="2008" name="J. Gen. Virol.">
        <title>Complete genome sequence analysis of Seneca Valley virus-001, a novel oncolytic picornavirus.</title>
        <authorList>
            <person name="Hales L.M."/>
            <person name="Knowles N.J."/>
            <person name="Reddy P.S."/>
            <person name="Xu L."/>
            <person name="Hay C."/>
            <person name="Hallenbeck P.L."/>
        </authorList>
    </citation>
    <scope>NUCLEOTIDE SEQUENCE [LARGE SCALE GENOMIC DNA]</scope>
    <scope>PROTEIN SEQUENCE OF 151-186; 435-470 AND 674-699</scope>
    <scope>FUNCTION (CAPSID PROTEIN VP1)</scope>
    <scope>FUNCTION (CAPSID PROTEIN VP2)</scope>
    <scope>FUNCTION (CAPSID PROTEIN VP3)</scope>
    <scope>PROTEOLYTIC CLEAVAGE (GENOME POLYPROTEIN)</scope>
</reference>
<reference key="2">
    <citation type="journal article" date="2017" name="J. Virol.">
        <title>Seneca Valley virus suppresses host type I interferon production by targeting adaptor proteins MAVS, TRIF, and TANK for cleavage.</title>
        <authorList>
            <person name="Qian S."/>
            <person name="Fan W."/>
            <person name="Liu T."/>
            <person name="Wu M."/>
            <person name="Zhang H."/>
            <person name="Cui X."/>
            <person name="Zhou Y."/>
            <person name="Hu J."/>
            <person name="Wei S."/>
            <person name="Chen H."/>
            <person name="Li X."/>
            <person name="Qian P."/>
        </authorList>
    </citation>
    <scope>FUNCTION (PROTEASE 3C)</scope>
    <scope>INTERACTION WITH HOST MAVS (PROTEASE 3C)</scope>
    <scope>INTERACTION WITH HOST TRIF (PROTEASE 3C)</scope>
    <scope>INTERACTION WITH HOST TANK (PROTEASE 3C)</scope>
</reference>
<reference key="3">
    <citation type="journal article" date="2018" name="Virology">
        <title>Seneca Valley Virus 3Cpro abrogates the IRF3- and IRF7-mediated innate immune response by degrading IRF3 and IRF7.</title>
        <authorList>
            <person name="Xue Q."/>
            <person name="Liu H."/>
            <person name="Zhu Z."/>
            <person name="Yang F."/>
            <person name="Ma L."/>
            <person name="Cai X."/>
            <person name="Xue Q."/>
            <person name="Zheng H."/>
        </authorList>
    </citation>
    <scope>FUNCTION (PROTEASE 3C)</scope>
    <scope>INTERACTION WITH HOST IRF3 (PROTEASE 3C)</scope>
    <scope>INTERACTION WITH HOST IRF7 (PROTEASE 3C)</scope>
</reference>
<reference key="4">
    <citation type="journal article" date="2018" name="Antiviral Res.">
        <title>Seneca Valley Virus 3C protease negatively regulates the type I interferon pathway by acting as a viral deubiquitinase.</title>
        <authorList>
            <person name="Xue Q."/>
            <person name="Liu H."/>
            <person name="Zhu Z."/>
            <person name="Yang F."/>
            <person name="Xue Q."/>
            <person name="Cai X."/>
            <person name="Liu X."/>
            <person name="Zheng H."/>
        </authorList>
    </citation>
    <scope>FUNCTION (PROTEASE 3C)</scope>
    <scope>MUTAGENESIS OF HIS-1556 AND CYS-1668</scope>
    <scope>INTERACTION WITH HOST RIGI (PROTEASE 3C)</scope>
    <scope>INTERACTION WITH HOST TBK1 (PROTEASE 3C)</scope>
    <scope>INTERACTION WITH HOST TRAF3 (PROTEASE 3C)</scope>
    <scope>ACTIVE SITE (PROTEASE 3C)</scope>
    <scope>CATALYTIC ACTIVITY (PROTEASE 3C)</scope>
</reference>
<reference key="5">
    <citation type="journal article" date="2020" name="Front. Immunol.">
        <title>Seneca Valley Virus 3C Protease Inhibits Stress Granule Formation by Disrupting eIF4GI-G3BP1 Interaction.</title>
        <authorList>
            <person name="Wen W."/>
            <person name="Zhao Q."/>
            <person name="Yin M."/>
            <person name="Qin L."/>
            <person name="Hu J."/>
            <person name="Chen H."/>
            <person name="Li X."/>
            <person name="Qian P."/>
        </authorList>
    </citation>
    <scope>FUNCTION (PROTEASE 3C)</scope>
</reference>
<reference evidence="25" key="6">
    <citation type="journal article" date="2008" name="Structure">
        <title>Structure of Seneca Valley Virus-001: an oncolytic picornavirus representing a new genus.</title>
        <authorList>
            <person name="Venkataraman S."/>
            <person name="Reddy S.P."/>
            <person name="Loo J."/>
            <person name="Idamakanti N."/>
            <person name="Hallenbeck P.L."/>
            <person name="Reddy V.S."/>
        </authorList>
    </citation>
    <scope>X-RAY CRYSTALLOGRAPHY (2.30 ANGSTROMS) OF 80-150; 151-434; 435-673 AND 674-936</scope>
    <scope>FUNCTION (CAPSID PROTEIN VP1)</scope>
    <scope>FUNCTION (CAPSID PROTEIN VP2)</scope>
    <scope>FUNCTION (CAPSID PROTEIN VP3)</scope>
    <scope>FUNCTION (CAPSID PROTEIN VP4)</scope>
</reference>
<reference evidence="26" key="7">
    <citation type="journal article" date="2018" name="Proc. Natl. Acad. Sci. U.S.A.">
        <title>Seneca Valley virus attachment and uncoating mediated by its receptor anthrax toxin receptor 1.</title>
        <authorList>
            <person name="Cao L."/>
            <person name="Zhang R."/>
            <person name="Liu T."/>
            <person name="Sun Z."/>
            <person name="Hu M."/>
            <person name="Sun Y."/>
            <person name="Cheng L."/>
            <person name="Guo Y."/>
            <person name="Fu S."/>
            <person name="Hu J."/>
            <person name="Li X."/>
            <person name="Yu C."/>
            <person name="Wang H."/>
            <person name="Chen H."/>
            <person name="Li X."/>
            <person name="Fry E.E."/>
            <person name="Stuart D.I."/>
            <person name="Qian P."/>
            <person name="Lou Z."/>
            <person name="Rao Z."/>
        </authorList>
    </citation>
    <scope>STRUCTURE BY ELECTRON MICROSCOPY (3.08 ANGSTROMS) OF 182-427 IN COMPLEX WITH HOST ANTXR1</scope>
    <scope>FUNCTION (CAPSID PROTEIN VP2)</scope>
    <scope>FUNCTION (CAPSID PROTEIN VP1)</scope>
    <scope>MUTAGENESIS OF ASP-316; TYR-331; TYR-332; ARG-333; ASN-336; TRP-337 AND ARG-761</scope>
    <scope>INTERACTION WITH HOST ANTXR1 (CAPSID PROTEIN VP1)</scope>
    <scope>INTERACTION WITH HOST ANTXR1 (CAPSID PROTEIN VP2)</scope>
    <source>
        <strain>Hubei</strain>
    </source>
</reference>
<reference evidence="27" key="8">
    <citation type="journal article" date="2018" name="Proc. Natl. Acad. Sci. U.S.A.">
        <title>Structural basis for anthrax toxin receptor 1 recognition by Seneca Valley Virus.</title>
        <authorList>
            <person name="Jayawardena N."/>
            <person name="Burga L.N."/>
            <person name="Easingwood R.A."/>
            <person name="Takizawa Y."/>
            <person name="Wolf M."/>
            <person name="Bostina M."/>
        </authorList>
    </citation>
    <scope>STRUCTURE BY ELECTRON MICROSCOPY (3.80 ANGSTROMS) OF 674-931; 435-672; 162-429 AND 93-150 IN COMPLEX WITH HOST ANTXR1</scope>
    <scope>FUNCTION (CAPSID PROTEIN VP2)</scope>
    <scope>FUNCTION (CAPSID PROTEIN VP1)</scope>
    <scope>INTERACTION WITH HOST ANTXR1 (CAPSID PROTEIN VP1)</scope>
    <scope>INTERACTION WITH HOST ANTXR1 (CAPSID PROTEIN VP2)</scope>
    <scope>FUNCTION (CAPSID PROTEIN VP3)</scope>
    <scope>INTERACTION WITH HOST ANTXR1 (CAPSID PROTEIN VP3)</scope>
</reference>
<reference evidence="28" key="9">
    <citation type="journal article" date="2022" name="J. Virol.">
        <title>Structure of Senecavirus A 3C Protease Revealed the Cleavage Pattern of 3C Protease in Picornaviruses.</title>
        <authorList>
            <person name="Meng K."/>
            <person name="Zhang L."/>
            <person name="Xue X."/>
            <person name="Xue Q."/>
            <person name="Sun M."/>
            <person name="Meng G."/>
        </authorList>
    </citation>
    <scope>X-RAY CRYSTALLOGRAPHY (1.90 ANGSTROMS) OF 1509-1719</scope>
    <scope>PROTEOLYTIC CLEAVAGE (GENOME POLYPROTEIN)</scope>
</reference>
<keyword id="KW-0002">3D-structure</keyword>
<keyword id="KW-0067">ATP-binding</keyword>
<keyword id="KW-0167">Capsid protein</keyword>
<keyword id="KW-0191">Covalent protein-RNA linkage</keyword>
<keyword id="KW-0903">Direct protein sequencing</keyword>
<keyword id="KW-0347">Helicase</keyword>
<keyword id="KW-1035">Host cytoplasm</keyword>
<keyword id="KW-1036">Host cytoplasmic vesicle</keyword>
<keyword id="KW-1043">Host membrane</keyword>
<keyword id="KW-1048">Host nucleus</keyword>
<keyword id="KW-0945">Host-virus interaction</keyword>
<keyword id="KW-0378">Hydrolase</keyword>
<keyword id="KW-1090">Inhibition of host innate immune response by virus</keyword>
<keyword id="KW-1092">Inhibition of host IRF3 by virus</keyword>
<keyword id="KW-1093">Inhibition of host IRF7 by virus</keyword>
<keyword id="KW-1097">Inhibition of host MAVS by virus</keyword>
<keyword id="KW-1088">Inhibition of host RIG-I by virus</keyword>
<keyword id="KW-1113">Inhibition of host RLR pathway by virus</keyword>
<keyword id="KW-1223">Inhibition of host TBK1 by virus</keyword>
<keyword id="KW-1225">Inhibition of host TLR pathway by virus</keyword>
<keyword id="KW-1110">Inhibition of host TRAFs by virus</keyword>
<keyword id="KW-0407">Ion channel</keyword>
<keyword id="KW-0406">Ion transport</keyword>
<keyword id="KW-0449">Lipoprotein</keyword>
<keyword id="KW-0472">Membrane</keyword>
<keyword id="KW-0519">Myristate</keyword>
<keyword id="KW-0547">Nucleotide-binding</keyword>
<keyword id="KW-0548">Nucleotidyltransferase</keyword>
<keyword id="KW-0597">Phosphoprotein</keyword>
<keyword id="KW-0645">Protease</keyword>
<keyword id="KW-1185">Reference proteome</keyword>
<keyword id="KW-0694">RNA-binding</keyword>
<keyword id="KW-0696">RNA-directed RNA polymerase</keyword>
<keyword id="KW-1143">T=pseudo3 icosahedral capsid protein</keyword>
<keyword id="KW-0788">Thiol protease</keyword>
<keyword id="KW-0808">Transferase</keyword>
<keyword id="KW-0813">Transport</keyword>
<keyword id="KW-0833">Ubl conjugation pathway</keyword>
<keyword id="KW-1233">Viral attachment to host adhesion receptor</keyword>
<keyword id="KW-1161">Viral attachment to host cell</keyword>
<keyword id="KW-1234">Viral attachment to host entry receptor</keyword>
<keyword id="KW-0899">Viral immunoevasion</keyword>
<keyword id="KW-1182">Viral ion channel</keyword>
<keyword id="KW-0693">Viral RNA replication</keyword>
<keyword id="KW-0946">Virion</keyword>
<keyword id="KW-1160">Virus entry into host cell</keyword>